<reference key="1">
    <citation type="journal article" date="2001" name="Mol. Gen. Genet.">
        <title>Comparison of psbK operon organization and group III intron content in chloroplast genomes of 12 Euglenoid species.</title>
        <authorList>
            <person name="Doetsch N.A."/>
            <person name="Thompson M.D."/>
            <person name="Favreau M.R."/>
            <person name="Hallick R.B."/>
        </authorList>
    </citation>
    <scope>NUCLEOTIDE SEQUENCE [GENOMIC DNA]</scope>
</reference>
<gene>
    <name evidence="1" type="primary">psbK</name>
</gene>
<evidence type="ECO:0000255" key="1">
    <source>
        <dbReference type="HAMAP-Rule" id="MF_00441"/>
    </source>
</evidence>
<evidence type="ECO:0000305" key="2"/>
<geneLocation type="chloroplast"/>
<dbReference type="EMBL" id="AF241281">
    <property type="protein sequence ID" value="AAF82454.1"/>
    <property type="molecule type" value="Genomic_DNA"/>
</dbReference>
<dbReference type="SMR" id="Q9MS64"/>
<dbReference type="GO" id="GO:0009535">
    <property type="term" value="C:chloroplast thylakoid membrane"/>
    <property type="evidence" value="ECO:0007669"/>
    <property type="project" value="UniProtKB-SubCell"/>
</dbReference>
<dbReference type="GO" id="GO:0009539">
    <property type="term" value="C:photosystem II reaction center"/>
    <property type="evidence" value="ECO:0007669"/>
    <property type="project" value="InterPro"/>
</dbReference>
<dbReference type="GO" id="GO:0015979">
    <property type="term" value="P:photosynthesis"/>
    <property type="evidence" value="ECO:0007669"/>
    <property type="project" value="UniProtKB-UniRule"/>
</dbReference>
<dbReference type="HAMAP" id="MF_00441">
    <property type="entry name" value="PSII_PsbK"/>
    <property type="match status" value="1"/>
</dbReference>
<dbReference type="InterPro" id="IPR003687">
    <property type="entry name" value="PSII_PsbK"/>
</dbReference>
<dbReference type="InterPro" id="IPR037270">
    <property type="entry name" value="PSII_PsbK_sf"/>
</dbReference>
<dbReference type="NCBIfam" id="NF002715">
    <property type="entry name" value="PRK02553.1"/>
    <property type="match status" value="1"/>
</dbReference>
<dbReference type="PANTHER" id="PTHR35325">
    <property type="match status" value="1"/>
</dbReference>
<dbReference type="PANTHER" id="PTHR35325:SF1">
    <property type="entry name" value="PHOTOSYSTEM II REACTION CENTER PROTEIN K"/>
    <property type="match status" value="1"/>
</dbReference>
<dbReference type="Pfam" id="PF02533">
    <property type="entry name" value="PsbK"/>
    <property type="match status" value="1"/>
</dbReference>
<dbReference type="SUPFAM" id="SSF161037">
    <property type="entry name" value="Photosystem II reaction center protein K, PsbK"/>
    <property type="match status" value="1"/>
</dbReference>
<organism>
    <name type="scientific">Euglena myxocylindracea</name>
    <dbReference type="NCBI Taxonomy" id="38276"/>
    <lineage>
        <taxon>Eukaryota</taxon>
        <taxon>Discoba</taxon>
        <taxon>Euglenozoa</taxon>
        <taxon>Euglenida</taxon>
        <taxon>Spirocuta</taxon>
        <taxon>Euglenophyceae</taxon>
        <taxon>Euglenales</taxon>
        <taxon>Euglenaceae</taxon>
        <taxon>Euglena</taxon>
    </lineage>
</organism>
<protein>
    <recommendedName>
        <fullName evidence="1">Photosystem II reaction center protein K</fullName>
        <shortName evidence="1">PSII-K</shortName>
    </recommendedName>
</protein>
<feature type="propeptide" id="PRO_0000029463" evidence="1">
    <location>
        <begin position="1"/>
        <end position="13"/>
    </location>
</feature>
<feature type="chain" id="PRO_0000029464" description="Photosystem II reaction center protein K" evidence="1">
    <location>
        <begin position="14"/>
        <end position="50"/>
    </location>
</feature>
<feature type="transmembrane region" description="Helical" evidence="1">
    <location>
        <begin position="25"/>
        <end position="45"/>
    </location>
</feature>
<proteinExistence type="inferred from homology"/>
<accession>Q9MS64</accession>
<sequence length="50" mass="5708">MLNLNFTNITVMGILPEAYAPFDPIVDILPIIPILFFLLAFVWQAAVKFR</sequence>
<comment type="function">
    <text evidence="1">One of the components of the core complex of photosystem II (PSII). PSII is a light-driven water:plastoquinone oxidoreductase that uses light energy to abstract electrons from H(2)O, generating O(2) and a proton gradient subsequently used for ATP formation. It consists of a core antenna complex that captures photons, and an electron transfer chain that converts photonic excitation into a charge separation.</text>
</comment>
<comment type="subunit">
    <text evidence="2">PSII is composed of 1 copy each of membrane proteins PsbA, PsbB, PsbC, PsbD, PsbE, PsbF, PsbH, PsbI, PsbJ, PsbK, PsbL, PsbM, PsbT, PsbY, PsbZ, Psb30/Ycf12, at least 3 peripheral proteins of the oxygen-evolving complex and a large number of cofactors. It forms dimeric complexes.</text>
</comment>
<comment type="subcellular location">
    <subcellularLocation>
        <location evidence="1">Plastid</location>
        <location evidence="1">Chloroplast thylakoid membrane</location>
        <topology evidence="1">Single-pass membrane protein</topology>
    </subcellularLocation>
</comment>
<comment type="similarity">
    <text evidence="1">Belongs to the PsbK family.</text>
</comment>
<keyword id="KW-0150">Chloroplast</keyword>
<keyword id="KW-0472">Membrane</keyword>
<keyword id="KW-0602">Photosynthesis</keyword>
<keyword id="KW-0604">Photosystem II</keyword>
<keyword id="KW-0934">Plastid</keyword>
<keyword id="KW-0674">Reaction center</keyword>
<keyword id="KW-0793">Thylakoid</keyword>
<keyword id="KW-0812">Transmembrane</keyword>
<keyword id="KW-1133">Transmembrane helix</keyword>
<name>PSBK_EUGMY</name>